<dbReference type="EMBL" id="L31628">
    <property type="protein sequence ID" value="AAA21685.1"/>
    <property type="molecule type" value="Genomic_DNA"/>
</dbReference>
<dbReference type="EMBL" id="U00096">
    <property type="protein sequence ID" value="AAC74653.1"/>
    <property type="molecule type" value="Genomic_DNA"/>
</dbReference>
<dbReference type="EMBL" id="AP009048">
    <property type="protein sequence ID" value="BAA15285.1"/>
    <property type="molecule type" value="Genomic_DNA"/>
</dbReference>
<dbReference type="PIR" id="I59589">
    <property type="entry name" value="I59589"/>
</dbReference>
<dbReference type="RefSeq" id="NP_416098.1">
    <property type="nucleotide sequence ID" value="NC_000913.3"/>
</dbReference>
<dbReference type="RefSeq" id="WP_001295394.1">
    <property type="nucleotide sequence ID" value="NZ_STEB01000003.1"/>
</dbReference>
<dbReference type="SMR" id="P38104"/>
<dbReference type="BioGRID" id="4260233">
    <property type="interactions" value="20"/>
</dbReference>
<dbReference type="DIP" id="DIP-10805N"/>
<dbReference type="FunCoup" id="P38104">
    <property type="interactions" value="345"/>
</dbReference>
<dbReference type="IntAct" id="P38104">
    <property type="interactions" value="14"/>
</dbReference>
<dbReference type="STRING" id="511145.b1581"/>
<dbReference type="PaxDb" id="511145-b1581"/>
<dbReference type="EnsemblBacteria" id="AAC74653">
    <property type="protein sequence ID" value="AAC74653"/>
    <property type="gene ID" value="b1581"/>
</dbReference>
<dbReference type="GeneID" id="75204424"/>
<dbReference type="GeneID" id="946126"/>
<dbReference type="KEGG" id="ecj:JW1573"/>
<dbReference type="KEGG" id="eco:b1581"/>
<dbReference type="KEGG" id="ecoc:C3026_09115"/>
<dbReference type="PATRIC" id="fig|1411691.4.peg.681"/>
<dbReference type="EchoBASE" id="EB2345"/>
<dbReference type="eggNOG" id="COG4948">
    <property type="taxonomic scope" value="Bacteria"/>
</dbReference>
<dbReference type="HOGENOM" id="CLU_030273_6_1_6"/>
<dbReference type="InParanoid" id="P38104"/>
<dbReference type="OMA" id="DWDTRAY"/>
<dbReference type="OrthoDB" id="103536at2"/>
<dbReference type="PhylomeDB" id="P38104"/>
<dbReference type="BioCyc" id="EcoCyc:G6839-MONOMER"/>
<dbReference type="PRO" id="PR:P38104"/>
<dbReference type="Proteomes" id="UP000000625">
    <property type="component" value="Chromosome"/>
</dbReference>
<dbReference type="GO" id="GO:0016836">
    <property type="term" value="F:hydro-lyase activity"/>
    <property type="evidence" value="ECO:0000318"/>
    <property type="project" value="GO_Central"/>
</dbReference>
<dbReference type="GO" id="GO:0000287">
    <property type="term" value="F:magnesium ion binding"/>
    <property type="evidence" value="ECO:0007669"/>
    <property type="project" value="UniProtKB-ARBA"/>
</dbReference>
<dbReference type="GO" id="GO:0008927">
    <property type="term" value="F:mannonate dehydratase activity"/>
    <property type="evidence" value="ECO:0007669"/>
    <property type="project" value="UniProtKB-ARBA"/>
</dbReference>
<dbReference type="GO" id="GO:0009063">
    <property type="term" value="P:amino acid catabolic process"/>
    <property type="evidence" value="ECO:0007669"/>
    <property type="project" value="InterPro"/>
</dbReference>
<dbReference type="GO" id="GO:0016052">
    <property type="term" value="P:carbohydrate catabolic process"/>
    <property type="evidence" value="ECO:0007669"/>
    <property type="project" value="UniProtKB-ARBA"/>
</dbReference>
<dbReference type="CDD" id="cd03322">
    <property type="entry name" value="RspA"/>
    <property type="match status" value="1"/>
</dbReference>
<dbReference type="FunFam" id="3.20.20.120:FF:000004">
    <property type="entry name" value="D-galactonate dehydratase family protein"/>
    <property type="match status" value="1"/>
</dbReference>
<dbReference type="FunFam" id="3.30.390.10:FF:000002">
    <property type="entry name" value="D-galactonate dehydratase family protein"/>
    <property type="match status" value="1"/>
</dbReference>
<dbReference type="Gene3D" id="3.20.20.120">
    <property type="entry name" value="Enolase-like C-terminal domain"/>
    <property type="match status" value="1"/>
</dbReference>
<dbReference type="Gene3D" id="3.30.390.10">
    <property type="entry name" value="Enolase-like, N-terminal domain"/>
    <property type="match status" value="1"/>
</dbReference>
<dbReference type="InterPro" id="IPR034589">
    <property type="entry name" value="D-mannonate_dehydratase-like"/>
</dbReference>
<dbReference type="InterPro" id="IPR053379">
    <property type="entry name" value="D-mannonate_dehydratase_GalD"/>
</dbReference>
<dbReference type="InterPro" id="IPR034593">
    <property type="entry name" value="DgoD-like"/>
</dbReference>
<dbReference type="InterPro" id="IPR036849">
    <property type="entry name" value="Enolase-like_C_sf"/>
</dbReference>
<dbReference type="InterPro" id="IPR029017">
    <property type="entry name" value="Enolase-like_N"/>
</dbReference>
<dbReference type="InterPro" id="IPR029065">
    <property type="entry name" value="Enolase_C-like"/>
</dbReference>
<dbReference type="InterPro" id="IPR018110">
    <property type="entry name" value="Mandel_Rmase/mucon_lact_enz_CS"/>
</dbReference>
<dbReference type="InterPro" id="IPR013342">
    <property type="entry name" value="Mandelate_racemase_C"/>
</dbReference>
<dbReference type="InterPro" id="IPR013341">
    <property type="entry name" value="Mandelate_racemase_N_dom"/>
</dbReference>
<dbReference type="NCBIfam" id="NF043051">
    <property type="entry name" value="ManoateDhtManD"/>
    <property type="match status" value="1"/>
</dbReference>
<dbReference type="NCBIfam" id="NF011654">
    <property type="entry name" value="PRK15072.1"/>
    <property type="match status" value="1"/>
</dbReference>
<dbReference type="PANTHER" id="PTHR48080">
    <property type="entry name" value="D-GALACTONATE DEHYDRATASE-RELATED"/>
    <property type="match status" value="1"/>
</dbReference>
<dbReference type="PANTHER" id="PTHR48080:SF6">
    <property type="entry name" value="STARVATION-SENSING PROTEIN RSPA"/>
    <property type="match status" value="1"/>
</dbReference>
<dbReference type="Pfam" id="PF13378">
    <property type="entry name" value="MR_MLE_C"/>
    <property type="match status" value="1"/>
</dbReference>
<dbReference type="Pfam" id="PF02746">
    <property type="entry name" value="MR_MLE_N"/>
    <property type="match status" value="1"/>
</dbReference>
<dbReference type="SFLD" id="SFLDS00001">
    <property type="entry name" value="Enolase"/>
    <property type="match status" value="1"/>
</dbReference>
<dbReference type="SFLD" id="SFLDG00033">
    <property type="entry name" value="mannonate_dehydratase"/>
    <property type="match status" value="1"/>
</dbReference>
<dbReference type="SMART" id="SM00922">
    <property type="entry name" value="MR_MLE"/>
    <property type="match status" value="1"/>
</dbReference>
<dbReference type="SUPFAM" id="SSF51604">
    <property type="entry name" value="Enolase C-terminal domain-like"/>
    <property type="match status" value="1"/>
</dbReference>
<dbReference type="SUPFAM" id="SSF54826">
    <property type="entry name" value="Enolase N-terminal domain-like"/>
    <property type="match status" value="1"/>
</dbReference>
<dbReference type="PROSITE" id="PS00908">
    <property type="entry name" value="MR_MLE_1"/>
    <property type="match status" value="1"/>
</dbReference>
<dbReference type="PROSITE" id="PS00909">
    <property type="entry name" value="MR_MLE_2"/>
    <property type="match status" value="1"/>
</dbReference>
<accession>P38104</accession>
<name>RSPA_ECOLI</name>
<protein>
    <recommendedName>
        <fullName>Starvation-sensing protein RspA</fullName>
    </recommendedName>
</protein>
<sequence length="404" mass="45968">MKIVKAEVFVTCPGRNFVTLKITTEDGITGLGDATLNGRELSVASYLQDHLCPQLIGRDAHRIEDIWQFFYKGAYWRRGPVTMSAISAVDMALWDIKAKAANMPLYQLLGGASREGVMVYCHTTGHSIDEALDDYARHQELGFKAIRVQCGIPGMKTTYGMSKGKGLAYEPATKGQWPEEQLWSTEKYLDFMPKLFDAVRNKFGFNEHLLHDMHHRLTPIEAARFGKSIEDYRMFWMEDPTPAENQECFRLIRQHTVTPIAVGEVFNSIWDCKQLIEEQLIDYIRTTLTHAGGITGMRRIADFASLYQVRTGSHGPSDLSPVCMAAALHFDLWVPNFGVQEYMGYSEQMLEVFPHNWTFDNGYMHPGDKPGLGIEFDEKLAAKYPYEPAYLPVARLEDGTLWNW</sequence>
<keyword id="KW-1185">Reference proteome</keyword>
<comment type="function">
    <text>Probably involved in the degradation of homoserine lactone (HSL) or of a metabolite of HSL that signals starvation.</text>
</comment>
<comment type="induction">
    <text evidence="1">Repressed by RspR.</text>
</comment>
<comment type="miscellaneous">
    <text evidence="2">Overexpression prevents homoserine lactone-dependent synthesis of the sigma S factor (rpoS).</text>
</comment>
<comment type="similarity">
    <text evidence="4">Belongs to the mandelate racemase/muconate lactonizing enzyme family.</text>
</comment>
<proteinExistence type="evidence at transcript level"/>
<gene>
    <name evidence="3" type="primary">rspA</name>
    <name type="ordered locus">b1581</name>
    <name type="ordered locus">JW1573</name>
</gene>
<organism>
    <name type="scientific">Escherichia coli (strain K12)</name>
    <dbReference type="NCBI Taxonomy" id="83333"/>
    <lineage>
        <taxon>Bacteria</taxon>
        <taxon>Pseudomonadati</taxon>
        <taxon>Pseudomonadota</taxon>
        <taxon>Gammaproteobacteria</taxon>
        <taxon>Enterobacterales</taxon>
        <taxon>Enterobacteriaceae</taxon>
        <taxon>Escherichia</taxon>
    </lineage>
</organism>
<evidence type="ECO:0000269" key="1">
    <source>
    </source>
</evidence>
<evidence type="ECO:0000269" key="2">
    <source>
    </source>
</evidence>
<evidence type="ECO:0000303" key="3">
    <source>
    </source>
</evidence>
<evidence type="ECO:0000305" key="4"/>
<feature type="chain" id="PRO_0000171260" description="Starvation-sensing protein RspA">
    <location>
        <begin position="1"/>
        <end position="404"/>
    </location>
</feature>
<reference key="1">
    <citation type="journal article" date="1994" name="Science">
        <title>Sensing starvation: a homoserine lactone-dependent signaling pathway in Escherichia coli.</title>
        <authorList>
            <person name="Huisman G.W."/>
            <person name="Kolter R."/>
        </authorList>
    </citation>
    <scope>NUCLEOTIDE SEQUENCE [GENOMIC DNA]</scope>
    <scope>OVEREXPRESSION</scope>
    <source>
        <strain>K12 / W3110 / ATCC 27325 / DSM 5911</strain>
    </source>
</reference>
<reference key="2">
    <citation type="journal article" date="1996" name="DNA Res.">
        <title>A 570-kb DNA sequence of the Escherichia coli K-12 genome corresponding to the 28.0-40.1 min region on the linkage map.</title>
        <authorList>
            <person name="Aiba H."/>
            <person name="Baba T."/>
            <person name="Fujita K."/>
            <person name="Hayashi K."/>
            <person name="Inada T."/>
            <person name="Isono K."/>
            <person name="Itoh T."/>
            <person name="Kasai H."/>
            <person name="Kashimoto K."/>
            <person name="Kimura S."/>
            <person name="Kitakawa M."/>
            <person name="Kitagawa M."/>
            <person name="Makino K."/>
            <person name="Miki T."/>
            <person name="Mizobuchi K."/>
            <person name="Mori H."/>
            <person name="Mori T."/>
            <person name="Motomura K."/>
            <person name="Nakade S."/>
            <person name="Nakamura Y."/>
            <person name="Nashimoto H."/>
            <person name="Nishio Y."/>
            <person name="Oshima T."/>
            <person name="Saito N."/>
            <person name="Sampei G."/>
            <person name="Seki Y."/>
            <person name="Sivasundaram S."/>
            <person name="Tagami H."/>
            <person name="Takeda J."/>
            <person name="Takemoto K."/>
            <person name="Takeuchi Y."/>
            <person name="Wada C."/>
            <person name="Yamamoto Y."/>
            <person name="Horiuchi T."/>
        </authorList>
    </citation>
    <scope>NUCLEOTIDE SEQUENCE [LARGE SCALE GENOMIC DNA]</scope>
    <source>
        <strain>K12 / W3110 / ATCC 27325 / DSM 5911</strain>
    </source>
</reference>
<reference key="3">
    <citation type="journal article" date="1997" name="Science">
        <title>The complete genome sequence of Escherichia coli K-12.</title>
        <authorList>
            <person name="Blattner F.R."/>
            <person name="Plunkett G. III"/>
            <person name="Bloch C.A."/>
            <person name="Perna N.T."/>
            <person name="Burland V."/>
            <person name="Riley M."/>
            <person name="Collado-Vides J."/>
            <person name="Glasner J.D."/>
            <person name="Rode C.K."/>
            <person name="Mayhew G.F."/>
            <person name="Gregor J."/>
            <person name="Davis N.W."/>
            <person name="Kirkpatrick H.A."/>
            <person name="Goeden M.A."/>
            <person name="Rose D.J."/>
            <person name="Mau B."/>
            <person name="Shao Y."/>
        </authorList>
    </citation>
    <scope>NUCLEOTIDE SEQUENCE [LARGE SCALE GENOMIC DNA]</scope>
    <source>
        <strain>K12 / MG1655 / ATCC 47076</strain>
    </source>
</reference>
<reference key="4">
    <citation type="journal article" date="2006" name="Mol. Syst. Biol.">
        <title>Highly accurate genome sequences of Escherichia coli K-12 strains MG1655 and W3110.</title>
        <authorList>
            <person name="Hayashi K."/>
            <person name="Morooka N."/>
            <person name="Yamamoto Y."/>
            <person name="Fujita K."/>
            <person name="Isono K."/>
            <person name="Choi S."/>
            <person name="Ohtsubo E."/>
            <person name="Baba T."/>
            <person name="Wanner B.L."/>
            <person name="Mori H."/>
            <person name="Horiuchi T."/>
        </authorList>
    </citation>
    <scope>NUCLEOTIDE SEQUENCE [LARGE SCALE GENOMIC DNA]</scope>
    <source>
        <strain>K12 / W3110 / ATCC 27325 / DSM 5911</strain>
    </source>
</reference>
<reference key="5">
    <citation type="journal article" date="2012" name="Biosci. Biotechnol. Biochem.">
        <title>YdfH identified as a repressor of rspA by the use of reduced genome Escherichia coli MGF-01.</title>
        <authorList>
            <person name="Sakihama Y."/>
            <person name="Mizoguchi H."/>
            <person name="Oshima T."/>
            <person name="Ogasawara N."/>
        </authorList>
    </citation>
    <scope>TRANSCRIPTIONAL REGULATION</scope>
    <source>
        <strain>K12 / W3110 / ATCC 27325 / DSM 5911</strain>
    </source>
</reference>